<organism>
    <name type="scientific">Escherichia coli O9:H4 (strain HS)</name>
    <dbReference type="NCBI Taxonomy" id="331112"/>
    <lineage>
        <taxon>Bacteria</taxon>
        <taxon>Pseudomonadati</taxon>
        <taxon>Pseudomonadota</taxon>
        <taxon>Gammaproteobacteria</taxon>
        <taxon>Enterobacterales</taxon>
        <taxon>Enterobacteriaceae</taxon>
        <taxon>Escherichia</taxon>
    </lineage>
</organism>
<sequence length="109" mass="11720">MAQFEWVHAAWLALAIVLEIVANVFLKFSDGFRRKIFGLLSLAAVLAAFSALSQAVKGIDLSVAYALWGGFGIAATLAAGWILFGQRLNRKGWIGLVLLLAGMIMVKLA</sequence>
<comment type="function">
    <text evidence="1">Catalyzes the excretion of spermidine.</text>
</comment>
<comment type="subunit">
    <text evidence="1">Forms a complex with MdtJ.</text>
</comment>
<comment type="subcellular location">
    <subcellularLocation>
        <location evidence="1">Cell inner membrane</location>
        <topology evidence="1">Multi-pass membrane protein</topology>
    </subcellularLocation>
</comment>
<comment type="similarity">
    <text evidence="1">Belongs to the drug/metabolite transporter (DMT) superfamily. Small multidrug resistance (SMR) (TC 2.A.7.1) family. MdtI subfamily.</text>
</comment>
<name>MDTI_ECOHS</name>
<dbReference type="EMBL" id="CP000802">
    <property type="protein sequence ID" value="ABV05994.1"/>
    <property type="molecule type" value="Genomic_DNA"/>
</dbReference>
<dbReference type="RefSeq" id="WP_000046661.1">
    <property type="nucleotide sequence ID" value="NC_009800.1"/>
</dbReference>
<dbReference type="SMR" id="A8A0E0"/>
<dbReference type="GeneID" id="93775747"/>
<dbReference type="KEGG" id="ecx:EcHS_A1673"/>
<dbReference type="HOGENOM" id="CLU_133067_0_4_6"/>
<dbReference type="GO" id="GO:0005886">
    <property type="term" value="C:plasma membrane"/>
    <property type="evidence" value="ECO:0007669"/>
    <property type="project" value="UniProtKB-SubCell"/>
</dbReference>
<dbReference type="GO" id="GO:0015199">
    <property type="term" value="F:amino-acid betaine transmembrane transporter activity"/>
    <property type="evidence" value="ECO:0007669"/>
    <property type="project" value="TreeGrafter"/>
</dbReference>
<dbReference type="GO" id="GO:0015297">
    <property type="term" value="F:antiporter activity"/>
    <property type="evidence" value="ECO:0007669"/>
    <property type="project" value="TreeGrafter"/>
</dbReference>
<dbReference type="GO" id="GO:0015220">
    <property type="term" value="F:choline transmembrane transporter activity"/>
    <property type="evidence" value="ECO:0007669"/>
    <property type="project" value="TreeGrafter"/>
</dbReference>
<dbReference type="GO" id="GO:0015606">
    <property type="term" value="F:spermidine transmembrane transporter activity"/>
    <property type="evidence" value="ECO:0007669"/>
    <property type="project" value="UniProtKB-UniRule"/>
</dbReference>
<dbReference type="GO" id="GO:0031460">
    <property type="term" value="P:glycine betaine transport"/>
    <property type="evidence" value="ECO:0007669"/>
    <property type="project" value="TreeGrafter"/>
</dbReference>
<dbReference type="FunFam" id="1.10.3730.20:FF:000001">
    <property type="entry name" value="Quaternary ammonium compound resistance transporter SugE"/>
    <property type="match status" value="1"/>
</dbReference>
<dbReference type="Gene3D" id="1.10.3730.20">
    <property type="match status" value="1"/>
</dbReference>
<dbReference type="HAMAP" id="MF_01597">
    <property type="entry name" value="MdtI"/>
    <property type="match status" value="1"/>
</dbReference>
<dbReference type="InterPro" id="IPR000390">
    <property type="entry name" value="Small_drug/metabolite_transptr"/>
</dbReference>
<dbReference type="InterPro" id="IPR045324">
    <property type="entry name" value="Small_multidrug_res"/>
</dbReference>
<dbReference type="InterPro" id="IPR023737">
    <property type="entry name" value="Spermidine_export_MdtI"/>
</dbReference>
<dbReference type="NCBIfam" id="NF007934">
    <property type="entry name" value="PRK10650.1"/>
    <property type="match status" value="1"/>
</dbReference>
<dbReference type="PANTHER" id="PTHR30561">
    <property type="entry name" value="SMR FAMILY PROTON-DEPENDENT DRUG EFFLUX TRANSPORTER SUGE"/>
    <property type="match status" value="1"/>
</dbReference>
<dbReference type="PANTHER" id="PTHR30561:SF6">
    <property type="entry name" value="SPERMIDINE EXPORT PROTEIN MDTI"/>
    <property type="match status" value="1"/>
</dbReference>
<dbReference type="Pfam" id="PF00893">
    <property type="entry name" value="Multi_Drug_Res"/>
    <property type="match status" value="1"/>
</dbReference>
<dbReference type="SUPFAM" id="SSF103481">
    <property type="entry name" value="Multidrug resistance efflux transporter EmrE"/>
    <property type="match status" value="1"/>
</dbReference>
<keyword id="KW-0997">Cell inner membrane</keyword>
<keyword id="KW-1003">Cell membrane</keyword>
<keyword id="KW-0472">Membrane</keyword>
<keyword id="KW-0812">Transmembrane</keyword>
<keyword id="KW-1133">Transmembrane helix</keyword>
<keyword id="KW-0813">Transport</keyword>
<gene>
    <name evidence="1" type="primary">mdtI</name>
    <name type="ordered locus">EcHS_A1673</name>
</gene>
<accession>A8A0E0</accession>
<reference key="1">
    <citation type="journal article" date="2008" name="J. Bacteriol.">
        <title>The pangenome structure of Escherichia coli: comparative genomic analysis of E. coli commensal and pathogenic isolates.</title>
        <authorList>
            <person name="Rasko D.A."/>
            <person name="Rosovitz M.J."/>
            <person name="Myers G.S.A."/>
            <person name="Mongodin E.F."/>
            <person name="Fricke W.F."/>
            <person name="Gajer P."/>
            <person name="Crabtree J."/>
            <person name="Sebaihia M."/>
            <person name="Thomson N.R."/>
            <person name="Chaudhuri R."/>
            <person name="Henderson I.R."/>
            <person name="Sperandio V."/>
            <person name="Ravel J."/>
        </authorList>
    </citation>
    <scope>NUCLEOTIDE SEQUENCE [LARGE SCALE GENOMIC DNA]</scope>
    <source>
        <strain>HS</strain>
    </source>
</reference>
<protein>
    <recommendedName>
        <fullName evidence="1">Spermidine export protein MdtI</fullName>
    </recommendedName>
</protein>
<proteinExistence type="inferred from homology"/>
<feature type="chain" id="PRO_0000331141" description="Spermidine export protein MdtI">
    <location>
        <begin position="1"/>
        <end position="109"/>
    </location>
</feature>
<feature type="transmembrane region" description="Helical" evidence="1">
    <location>
        <begin position="6"/>
        <end position="26"/>
    </location>
</feature>
<feature type="transmembrane region" description="Helical" evidence="1">
    <location>
        <begin position="36"/>
        <end position="56"/>
    </location>
</feature>
<feature type="transmembrane region" description="Helical" evidence="1">
    <location>
        <begin position="64"/>
        <end position="84"/>
    </location>
</feature>
<feature type="transmembrane region" description="Helical" evidence="1">
    <location>
        <begin position="88"/>
        <end position="108"/>
    </location>
</feature>
<evidence type="ECO:0000255" key="1">
    <source>
        <dbReference type="HAMAP-Rule" id="MF_01597"/>
    </source>
</evidence>